<comment type="function">
    <text evidence="1">Catalyzes the two-electron reduction of biliverdin IX-alpha at the C15 methine bridge.</text>
</comment>
<comment type="catalytic activity">
    <reaction evidence="1">
        <text>15,16-dihydrobiliverdin + oxidized 2[4Fe-4S]-[ferredoxin] = biliverdin IXalpha + reduced 2[4Fe-4S]-[ferredoxin] + 2 H(+)</text>
        <dbReference type="Rhea" id="RHEA:10168"/>
        <dbReference type="Rhea" id="RHEA-COMP:10002"/>
        <dbReference type="Rhea" id="RHEA-COMP:10004"/>
        <dbReference type="ChEBI" id="CHEBI:15378"/>
        <dbReference type="ChEBI" id="CHEBI:33722"/>
        <dbReference type="ChEBI" id="CHEBI:33723"/>
        <dbReference type="ChEBI" id="CHEBI:57899"/>
        <dbReference type="ChEBI" id="CHEBI:57991"/>
        <dbReference type="EC" id="1.3.7.2"/>
    </reaction>
</comment>
<comment type="similarity">
    <text evidence="1">Belongs to the HY2 family.</text>
</comment>
<proteinExistence type="inferred from homology"/>
<keyword id="KW-0560">Oxidoreductase</keyword>
<keyword id="KW-1185">Reference proteome</keyword>
<accession>A9BCT3</accession>
<sequence>MFDPYLDELNKLLIVNHGEILLVPDGLQECYSKKQDAVIRSWLWSVPGFRRWRVTRMDVGDKLQVFNSVAYPDYLNEQPIMGIDLLWFGIKNKLVAVLDFQPLVQEKSYFDRYYQGLKSLKARYSDFNSKDNVRAYDLSNYFSPWVLLCKGDLFQASSSLPFVFSEFLNAYFDISNNFKKYNSRIEPNRVKELQISYDIYSSAHDPAHGLFKSYFGKQWSERFLKEFLFPHSIAKDKT</sequence>
<feature type="chain" id="PRO_1000133827" description="15,16-dihydrobiliverdin:ferredoxin oxidoreductase">
    <location>
        <begin position="1"/>
        <end position="238"/>
    </location>
</feature>
<gene>
    <name evidence="1" type="primary">pebA</name>
    <name type="ordered locus">P9211_17141</name>
</gene>
<name>PEBA_PROM4</name>
<dbReference type="EC" id="1.3.7.2" evidence="1"/>
<dbReference type="EMBL" id="CP000878">
    <property type="protein sequence ID" value="ABX09645.1"/>
    <property type="molecule type" value="Genomic_DNA"/>
</dbReference>
<dbReference type="RefSeq" id="WP_012196265.1">
    <property type="nucleotide sequence ID" value="NC_009976.1"/>
</dbReference>
<dbReference type="SMR" id="A9BCT3"/>
<dbReference type="STRING" id="93059.P9211_17141"/>
<dbReference type="KEGG" id="pmj:P9211_17141"/>
<dbReference type="eggNOG" id="ENOG502Z8J9">
    <property type="taxonomic scope" value="Bacteria"/>
</dbReference>
<dbReference type="HOGENOM" id="CLU_086208_0_0_3"/>
<dbReference type="OrthoDB" id="527390at2"/>
<dbReference type="Proteomes" id="UP000000788">
    <property type="component" value="Chromosome"/>
</dbReference>
<dbReference type="GO" id="GO:0050617">
    <property type="term" value="F:15,16-dihydrobiliverdin:ferredoxin oxidoreductase activity"/>
    <property type="evidence" value="ECO:0007669"/>
    <property type="project" value="UniProtKB-UniRule"/>
</dbReference>
<dbReference type="GO" id="GO:0050897">
    <property type="term" value="F:cobalt ion binding"/>
    <property type="evidence" value="ECO:0007669"/>
    <property type="project" value="InterPro"/>
</dbReference>
<dbReference type="GO" id="GO:0010024">
    <property type="term" value="P:phytochromobilin biosynthetic process"/>
    <property type="evidence" value="ECO:0007669"/>
    <property type="project" value="InterPro"/>
</dbReference>
<dbReference type="Gene3D" id="3.40.1500.20">
    <property type="match status" value="1"/>
</dbReference>
<dbReference type="HAMAP" id="MF_00792">
    <property type="entry name" value="PebA"/>
    <property type="match status" value="1"/>
</dbReference>
<dbReference type="InterPro" id="IPR023658">
    <property type="entry name" value="DiHydbiliverdin_OxRdtase"/>
</dbReference>
<dbReference type="InterPro" id="IPR009249">
    <property type="entry name" value="Ferredoxin-dep_bilin_Rdtase"/>
</dbReference>
<dbReference type="NCBIfam" id="NF009720">
    <property type="entry name" value="PRK13247.1"/>
    <property type="match status" value="1"/>
</dbReference>
<dbReference type="PANTHER" id="PTHR34557">
    <property type="entry name" value="PHYTOCHROMOBILIN:FERREDOXIN OXIDOREDUCTASE, CHLOROPLASTIC"/>
    <property type="match status" value="1"/>
</dbReference>
<dbReference type="PANTHER" id="PTHR34557:SF1">
    <property type="entry name" value="PHYTOCHROMOBILIN:FERREDOXIN OXIDOREDUCTASE, CHLOROPLASTIC"/>
    <property type="match status" value="1"/>
</dbReference>
<dbReference type="Pfam" id="PF05996">
    <property type="entry name" value="Fe_bilin_red"/>
    <property type="match status" value="1"/>
</dbReference>
<organism>
    <name type="scientific">Prochlorococcus marinus (strain MIT 9211)</name>
    <dbReference type="NCBI Taxonomy" id="93059"/>
    <lineage>
        <taxon>Bacteria</taxon>
        <taxon>Bacillati</taxon>
        <taxon>Cyanobacteriota</taxon>
        <taxon>Cyanophyceae</taxon>
        <taxon>Synechococcales</taxon>
        <taxon>Prochlorococcaceae</taxon>
        <taxon>Prochlorococcus</taxon>
    </lineage>
</organism>
<evidence type="ECO:0000255" key="1">
    <source>
        <dbReference type="HAMAP-Rule" id="MF_00792"/>
    </source>
</evidence>
<protein>
    <recommendedName>
        <fullName evidence="1">15,16-dihydrobiliverdin:ferredoxin oxidoreductase</fullName>
        <ecNumber evidence="1">1.3.7.2</ecNumber>
    </recommendedName>
</protein>
<reference key="1">
    <citation type="journal article" date="2007" name="PLoS Genet.">
        <title>Patterns and implications of gene gain and loss in the evolution of Prochlorococcus.</title>
        <authorList>
            <person name="Kettler G.C."/>
            <person name="Martiny A.C."/>
            <person name="Huang K."/>
            <person name="Zucker J."/>
            <person name="Coleman M.L."/>
            <person name="Rodrigue S."/>
            <person name="Chen F."/>
            <person name="Lapidus A."/>
            <person name="Ferriera S."/>
            <person name="Johnson J."/>
            <person name="Steglich C."/>
            <person name="Church G.M."/>
            <person name="Richardson P."/>
            <person name="Chisholm S.W."/>
        </authorList>
    </citation>
    <scope>NUCLEOTIDE SEQUENCE [LARGE SCALE GENOMIC DNA]</scope>
    <source>
        <strain>MIT 9211</strain>
    </source>
</reference>